<evidence type="ECO:0000250" key="1"/>
<evidence type="ECO:0000255" key="2"/>
<evidence type="ECO:0000255" key="3">
    <source>
        <dbReference type="PROSITE-ProRule" id="PRU00836"/>
    </source>
</evidence>
<evidence type="ECO:0000305" key="4"/>
<name>RCF1_PICST</name>
<reference key="1">
    <citation type="journal article" date="2007" name="Nat. Biotechnol.">
        <title>Genome sequence of the lignocellulose-bioconverting and xylose-fermenting yeast Pichia stipitis.</title>
        <authorList>
            <person name="Jeffries T.W."/>
            <person name="Grigoriev I.V."/>
            <person name="Grimwood J."/>
            <person name="Laplaza J.M."/>
            <person name="Aerts A."/>
            <person name="Salamov A."/>
            <person name="Schmutz J."/>
            <person name="Lindquist E."/>
            <person name="Dehal P."/>
            <person name="Shapiro H."/>
            <person name="Jin Y.-S."/>
            <person name="Passoth V."/>
            <person name="Richardson P.M."/>
        </authorList>
    </citation>
    <scope>NUCLEOTIDE SEQUENCE [LARGE SCALE GENOMIC DNA]</scope>
    <source>
        <strain>ATCC 58785 / CBS 6054 / NBRC 10063 / NRRL Y-11545</strain>
    </source>
</reference>
<keyword id="KW-0175">Coiled coil</keyword>
<keyword id="KW-0472">Membrane</keyword>
<keyword id="KW-0496">Mitochondrion</keyword>
<keyword id="KW-1185">Reference proteome</keyword>
<keyword id="KW-0812">Transmembrane</keyword>
<keyword id="KW-1133">Transmembrane helix</keyword>
<proteinExistence type="inferred from homology"/>
<sequence>MVIRSKEQPVVPLGALATTGAIILAARSMKRGEKLRTQVYFRYRVVFQLITLVALVAGGVMMQQESAEQKKTREDKLREKAKQREKLWIEELERRDALIQERKRRLEESRAELKKMAEEGFKQENDNSKGK</sequence>
<gene>
    <name type="primary">RCF1</name>
    <name type="synonym">AIM31</name>
    <name type="ORF">PICST_36309</name>
</gene>
<protein>
    <recommendedName>
        <fullName>Respiratory supercomplex factor 1, mitochondrial</fullName>
    </recommendedName>
</protein>
<accession>A3LVL1</accession>
<comment type="function">
    <text evidence="1">Cytochrome c oxidase subunit which plays a role in assembly of respiratory supercomplexes.</text>
</comment>
<comment type="subunit">
    <text evidence="1">Associates with the respiratory chain complex III/complex IV supercomplex.</text>
</comment>
<comment type="subcellular location">
    <subcellularLocation>
        <location evidence="3">Mitochondrion membrane</location>
        <topology evidence="3">Multi-pass membrane protein</topology>
    </subcellularLocation>
</comment>
<comment type="similarity">
    <text evidence="4">Belongs to the RCF1 family.</text>
</comment>
<feature type="chain" id="PRO_0000399651" description="Respiratory supercomplex factor 1, mitochondrial">
    <location>
        <begin position="1"/>
        <end position="131"/>
    </location>
</feature>
<feature type="transmembrane region" description="Helical" evidence="3">
    <location>
        <begin position="10"/>
        <end position="27"/>
    </location>
</feature>
<feature type="transmembrane region" description="Helical" evidence="3">
    <location>
        <begin position="40"/>
        <end position="62"/>
    </location>
</feature>
<feature type="domain" description="HIG1" evidence="3">
    <location>
        <begin position="1"/>
        <end position="73"/>
    </location>
</feature>
<feature type="coiled-coil region" evidence="2">
    <location>
        <begin position="62"/>
        <end position="120"/>
    </location>
</feature>
<organism>
    <name type="scientific">Scheffersomyces stipitis (strain ATCC 58785 / CBS 6054 / NBRC 10063 / NRRL Y-11545)</name>
    <name type="common">Yeast</name>
    <name type="synonym">Pichia stipitis</name>
    <dbReference type="NCBI Taxonomy" id="322104"/>
    <lineage>
        <taxon>Eukaryota</taxon>
        <taxon>Fungi</taxon>
        <taxon>Dikarya</taxon>
        <taxon>Ascomycota</taxon>
        <taxon>Saccharomycotina</taxon>
        <taxon>Pichiomycetes</taxon>
        <taxon>Debaryomycetaceae</taxon>
        <taxon>Scheffersomyces</taxon>
    </lineage>
</organism>
<dbReference type="EMBL" id="CP000499">
    <property type="protein sequence ID" value="ABN67139.1"/>
    <property type="molecule type" value="Genomic_DNA"/>
</dbReference>
<dbReference type="RefSeq" id="XP_001385168.1">
    <property type="nucleotide sequence ID" value="XM_001385131.1"/>
</dbReference>
<dbReference type="FunCoup" id="A3LVL1">
    <property type="interactions" value="93"/>
</dbReference>
<dbReference type="STRING" id="322104.A3LVL1"/>
<dbReference type="GeneID" id="4839446"/>
<dbReference type="KEGG" id="pic:PICST_36309"/>
<dbReference type="eggNOG" id="KOG4431">
    <property type="taxonomic scope" value="Eukaryota"/>
</dbReference>
<dbReference type="HOGENOM" id="CLU_087356_1_0_1"/>
<dbReference type="InParanoid" id="A3LVL1"/>
<dbReference type="OMA" id="YYRTERT"/>
<dbReference type="OrthoDB" id="6604018at2759"/>
<dbReference type="Proteomes" id="UP000002258">
    <property type="component" value="Chromosome 5"/>
</dbReference>
<dbReference type="GO" id="GO:0005743">
    <property type="term" value="C:mitochondrial inner membrane"/>
    <property type="evidence" value="ECO:0007669"/>
    <property type="project" value="EnsemblFungi"/>
</dbReference>
<dbReference type="GO" id="GO:0098803">
    <property type="term" value="C:respiratory chain complex"/>
    <property type="evidence" value="ECO:0007669"/>
    <property type="project" value="EnsemblFungi"/>
</dbReference>
<dbReference type="GO" id="GO:0033617">
    <property type="term" value="P:mitochondrial cytochrome c oxidase assembly"/>
    <property type="evidence" value="ECO:0007669"/>
    <property type="project" value="EnsemblFungi"/>
</dbReference>
<dbReference type="GO" id="GO:0097250">
    <property type="term" value="P:mitochondrial respirasome assembly"/>
    <property type="evidence" value="ECO:0007669"/>
    <property type="project" value="EnsemblFungi"/>
</dbReference>
<dbReference type="GO" id="GO:0010155">
    <property type="term" value="P:regulation of proton transport"/>
    <property type="evidence" value="ECO:0007669"/>
    <property type="project" value="EnsemblFungi"/>
</dbReference>
<dbReference type="Gene3D" id="6.10.140.1320">
    <property type="match status" value="1"/>
</dbReference>
<dbReference type="InterPro" id="IPR007667">
    <property type="entry name" value="Hypoxia_induced_domain"/>
</dbReference>
<dbReference type="InterPro" id="IPR050355">
    <property type="entry name" value="RCF1"/>
</dbReference>
<dbReference type="PANTHER" id="PTHR12297:SF3">
    <property type="entry name" value="HIG1 DOMAIN FAMILY MEMBER 1A"/>
    <property type="match status" value="1"/>
</dbReference>
<dbReference type="PANTHER" id="PTHR12297">
    <property type="entry name" value="HYPOXIA-INDUCBILE GENE 1 HIG1 -RELATED"/>
    <property type="match status" value="1"/>
</dbReference>
<dbReference type="Pfam" id="PF04588">
    <property type="entry name" value="HIG_1_N"/>
    <property type="match status" value="1"/>
</dbReference>
<dbReference type="PROSITE" id="PS51503">
    <property type="entry name" value="HIG1"/>
    <property type="match status" value="1"/>
</dbReference>